<reference key="1">
    <citation type="journal article" date="1998" name="Antimicrob. Agents Chemother.">
        <title>NorM, a putative multidrug efflux protein, of Vibrio parahaemolyticus and its homolog in Escherichia coli.</title>
        <authorList>
            <person name="Morita Y."/>
            <person name="Kodama K."/>
            <person name="Shiota S."/>
            <person name="Mine T."/>
            <person name="Kataoka A."/>
            <person name="Mizushima T."/>
            <person name="Tsuchiya T."/>
        </authorList>
    </citation>
    <scope>NUCLEOTIDE SEQUENCE [GENOMIC DNA]</scope>
    <scope>CHARACTERIZATION</scope>
    <source>
        <strain>AQ3334</strain>
    </source>
</reference>
<reference key="2">
    <citation type="journal article" date="2003" name="Lancet">
        <title>Genome sequence of Vibrio parahaemolyticus: a pathogenic mechanism distinct from that of V. cholerae.</title>
        <authorList>
            <person name="Makino K."/>
            <person name="Oshima K."/>
            <person name="Kurokawa K."/>
            <person name="Yokoyama K."/>
            <person name="Uda T."/>
            <person name="Tagomori K."/>
            <person name="Iijima Y."/>
            <person name="Najima M."/>
            <person name="Nakano M."/>
            <person name="Yamashita A."/>
            <person name="Kubota Y."/>
            <person name="Kimura S."/>
            <person name="Yasunaga T."/>
            <person name="Honda T."/>
            <person name="Shinagawa H."/>
            <person name="Hattori M."/>
            <person name="Iida T."/>
        </authorList>
    </citation>
    <scope>NUCLEOTIDE SEQUENCE [LARGE SCALE GENOMIC DNA]</scope>
    <source>
        <strain>RIMD 2210633</strain>
    </source>
</reference>
<reference key="3">
    <citation type="journal article" date="1999" name="Mol. Microbiol.">
        <title>The multidrug efflux protein NorM is a prototype of a new family of transporters.</title>
        <authorList>
            <person name="Brown M.H."/>
            <person name="Paulsen I.T."/>
            <person name="Skurray R.A."/>
        </authorList>
    </citation>
    <scope>IDENTIFICATION OF THE MATE FAMILY</scope>
</reference>
<reference key="4">
    <citation type="journal article" date="2000" name="J. Bacteriol.">
        <title>NorM of Vibrio parahaemolyticus is an Na(+)-driven multidrug efflux pump.</title>
        <authorList>
            <person name="Morita Y."/>
            <person name="Kataoka A."/>
            <person name="Shiota S."/>
            <person name="Mizushima T."/>
            <person name="Tsuchiya T."/>
        </authorList>
    </citation>
    <scope>CHARACTERIZATION</scope>
    <source>
        <strain>AQ3334</strain>
    </source>
</reference>
<feature type="chain" id="PRO_0000164246" description="Multidrug resistance protein NorM">
    <location>
        <begin position="1"/>
        <end position="456"/>
    </location>
</feature>
<feature type="transmembrane region" description="Helical" evidence="2">
    <location>
        <begin position="11"/>
        <end position="31"/>
    </location>
</feature>
<feature type="transmembrane region" description="Helical" evidence="2">
    <location>
        <begin position="53"/>
        <end position="73"/>
    </location>
</feature>
<feature type="transmembrane region" description="Helical" evidence="2">
    <location>
        <begin position="92"/>
        <end position="112"/>
    </location>
</feature>
<feature type="transmembrane region" description="Helical" evidence="2">
    <location>
        <begin position="126"/>
        <end position="146"/>
    </location>
</feature>
<feature type="transmembrane region" description="Helical" evidence="2">
    <location>
        <begin position="159"/>
        <end position="179"/>
    </location>
</feature>
<feature type="transmembrane region" description="Helical" evidence="2">
    <location>
        <begin position="189"/>
        <end position="209"/>
    </location>
</feature>
<feature type="transmembrane region" description="Helical" evidence="2">
    <location>
        <begin position="242"/>
        <end position="262"/>
    </location>
</feature>
<feature type="transmembrane region" description="Helical" evidence="2">
    <location>
        <begin position="268"/>
        <end position="288"/>
    </location>
</feature>
<feature type="transmembrane region" description="Helical" evidence="2">
    <location>
        <begin position="314"/>
        <end position="334"/>
    </location>
</feature>
<feature type="transmembrane region" description="Helical" evidence="2">
    <location>
        <begin position="356"/>
        <end position="376"/>
    </location>
</feature>
<feature type="transmembrane region" description="Helical" evidence="2">
    <location>
        <begin position="385"/>
        <end position="405"/>
    </location>
</feature>
<feature type="transmembrane region" description="Helical" evidence="2">
    <location>
        <begin position="417"/>
        <end position="437"/>
    </location>
</feature>
<feature type="sequence conflict" description="In Ref. 1; BAA31456." evidence="3" ref="1">
    <original>SA</original>
    <variation>TQ</variation>
    <location>
        <begin position="40"/>
        <end position="41"/>
    </location>
</feature>
<feature type="sequence conflict" description="In Ref. 1; BAA31456." evidence="3" ref="1">
    <original>G</original>
    <variation>D</variation>
    <location>
        <position position="124"/>
    </location>
</feature>
<feature type="sequence conflict" description="In Ref. 1; BAA31456." evidence="3" ref="1">
    <original>S</original>
    <variation>T</variation>
    <location>
        <position position="351"/>
    </location>
</feature>
<gene>
    <name type="primary">norM</name>
    <name type="ordered locus">VP1479</name>
</gene>
<evidence type="ECO:0000250" key="1"/>
<evidence type="ECO:0000255" key="2"/>
<evidence type="ECO:0000305" key="3"/>
<keyword id="KW-0046">Antibiotic resistance</keyword>
<keyword id="KW-0050">Antiport</keyword>
<keyword id="KW-0997">Cell inner membrane</keyword>
<keyword id="KW-1003">Cell membrane</keyword>
<keyword id="KW-0406">Ion transport</keyword>
<keyword id="KW-0472">Membrane</keyword>
<keyword id="KW-0915">Sodium</keyword>
<keyword id="KW-0739">Sodium transport</keyword>
<keyword id="KW-0812">Transmembrane</keyword>
<keyword id="KW-1133">Transmembrane helix</keyword>
<keyword id="KW-0813">Transport</keyword>
<sequence length="456" mass="49280">MHRYKEEASSLIKLATPVLIASVAQTGMGFVDTVMAGGVSATDMAAVSVASSIWLPSILFGIGLLMALVPVVAQLNGSARREKIPFEIQQGVVLALLISIPIIGVLLQTQFILQLMDVEAVMAGKTVGYIHAVIFAVPAFLLFQTLRSFTDGMSLTKPAMVIGFIGLLLNIPLNWIFVYGKFGAPELGGVGCGVATTIVYWVMFALLLAYVMTSSRLKSINVFGEYHKPQWKAQVRLFKLGFPVAAALFFEVTLFAVVALLVSPLGPIIVAAHQVAINFSSLVFMLPMSVGAAVSIRVGHRLGEENVDGARVASRVGIMVGLALATITAIITVLSRELIAELYTNNPEVISLAMQLLLFAAVYQCTDAVQVIAAGALRGYKDMRAIFNRTFIAYWILGLPTGYILGRTDWIVEPMGAQGFWLGFIIGLTAAALMLGVRLRWMHRQEPDVQLNFSLQ</sequence>
<organism>
    <name type="scientific">Vibrio parahaemolyticus serotype O3:K6 (strain RIMD 2210633)</name>
    <dbReference type="NCBI Taxonomy" id="223926"/>
    <lineage>
        <taxon>Bacteria</taxon>
        <taxon>Pseudomonadati</taxon>
        <taxon>Pseudomonadota</taxon>
        <taxon>Gammaproteobacteria</taxon>
        <taxon>Vibrionales</taxon>
        <taxon>Vibrionaceae</taxon>
        <taxon>Vibrio</taxon>
    </lineage>
</organism>
<accession>O82855</accession>
<protein>
    <recommendedName>
        <fullName>Multidrug resistance protein NorM</fullName>
    </recommendedName>
    <alternativeName>
        <fullName>Multidrug-efflux transporter</fullName>
    </alternativeName>
    <alternativeName>
        <fullName>Na(+)/drug antiporter</fullName>
    </alternativeName>
</protein>
<dbReference type="EMBL" id="AB010463">
    <property type="protein sequence ID" value="BAA31456.1"/>
    <property type="molecule type" value="Genomic_DNA"/>
</dbReference>
<dbReference type="EMBL" id="BA000031">
    <property type="protein sequence ID" value="BAC59742.1"/>
    <property type="molecule type" value="Genomic_DNA"/>
</dbReference>
<dbReference type="RefSeq" id="NP_797858.1">
    <property type="nucleotide sequence ID" value="NC_004603.1"/>
</dbReference>
<dbReference type="RefSeq" id="WP_005483441.1">
    <property type="nucleotide sequence ID" value="NC_004603.1"/>
</dbReference>
<dbReference type="SMR" id="O82855"/>
<dbReference type="TCDB" id="2.A.66.1.1">
    <property type="family name" value="the multidrug/oligosaccharidyl-lipid/polysaccharide (mop) flippase superfamily"/>
</dbReference>
<dbReference type="GeneID" id="1188986"/>
<dbReference type="KEGG" id="vpa:VP1479"/>
<dbReference type="PATRIC" id="fig|223926.6.peg.1412"/>
<dbReference type="eggNOG" id="COG0534">
    <property type="taxonomic scope" value="Bacteria"/>
</dbReference>
<dbReference type="HOGENOM" id="CLU_012893_6_0_6"/>
<dbReference type="Proteomes" id="UP000002493">
    <property type="component" value="Chromosome 1"/>
</dbReference>
<dbReference type="GO" id="GO:0005886">
    <property type="term" value="C:plasma membrane"/>
    <property type="evidence" value="ECO:0007669"/>
    <property type="project" value="UniProtKB-SubCell"/>
</dbReference>
<dbReference type="GO" id="GO:0015297">
    <property type="term" value="F:antiporter activity"/>
    <property type="evidence" value="ECO:0007669"/>
    <property type="project" value="UniProtKB-KW"/>
</dbReference>
<dbReference type="GO" id="GO:0042910">
    <property type="term" value="F:xenobiotic transmembrane transporter activity"/>
    <property type="evidence" value="ECO:0007669"/>
    <property type="project" value="InterPro"/>
</dbReference>
<dbReference type="GO" id="GO:0046677">
    <property type="term" value="P:response to antibiotic"/>
    <property type="evidence" value="ECO:0007669"/>
    <property type="project" value="UniProtKB-KW"/>
</dbReference>
<dbReference type="GO" id="GO:0006814">
    <property type="term" value="P:sodium ion transport"/>
    <property type="evidence" value="ECO:0007669"/>
    <property type="project" value="UniProtKB-KW"/>
</dbReference>
<dbReference type="CDD" id="cd13131">
    <property type="entry name" value="MATE_NorM_like"/>
    <property type="match status" value="1"/>
</dbReference>
<dbReference type="InterPro" id="IPR002528">
    <property type="entry name" value="MATE_fam"/>
</dbReference>
<dbReference type="InterPro" id="IPR050222">
    <property type="entry name" value="MATE_MdtK"/>
</dbReference>
<dbReference type="InterPro" id="IPR048279">
    <property type="entry name" value="MdtK-like"/>
</dbReference>
<dbReference type="NCBIfam" id="TIGR00797">
    <property type="entry name" value="matE"/>
    <property type="match status" value="1"/>
</dbReference>
<dbReference type="PANTHER" id="PTHR43298:SF2">
    <property type="entry name" value="FMN_FAD EXPORTER YEEO-RELATED"/>
    <property type="match status" value="1"/>
</dbReference>
<dbReference type="PANTHER" id="PTHR43298">
    <property type="entry name" value="MULTIDRUG RESISTANCE PROTEIN NORM-RELATED"/>
    <property type="match status" value="1"/>
</dbReference>
<dbReference type="Pfam" id="PF01554">
    <property type="entry name" value="MatE"/>
    <property type="match status" value="2"/>
</dbReference>
<dbReference type="PIRSF" id="PIRSF006603">
    <property type="entry name" value="DinF"/>
    <property type="match status" value="1"/>
</dbReference>
<proteinExistence type="evidence at protein level"/>
<comment type="function">
    <text>Multidrug efflux pump that functions as a Na(+)/drug antiporter. Confers resistance to several drugs, such as norfloxacin, ciprofloxacin, ethidium, kanamycin and streptomycin.</text>
</comment>
<comment type="subcellular location">
    <subcellularLocation>
        <location evidence="1">Cell inner membrane</location>
        <topology evidence="1">Multi-pass membrane protein</topology>
    </subcellularLocation>
</comment>
<comment type="similarity">
    <text evidence="3">Belongs to the multi antimicrobial extrusion (MATE) (TC 2.A.66.1) family.</text>
</comment>
<name>NORM_VIBPA</name>